<organism>
    <name type="scientific">Actinobacillus pleuropneumoniae serotype 5b (strain L20)</name>
    <dbReference type="NCBI Taxonomy" id="416269"/>
    <lineage>
        <taxon>Bacteria</taxon>
        <taxon>Pseudomonadati</taxon>
        <taxon>Pseudomonadota</taxon>
        <taxon>Gammaproteobacteria</taxon>
        <taxon>Pasteurellales</taxon>
        <taxon>Pasteurellaceae</taxon>
        <taxon>Actinobacillus</taxon>
    </lineage>
</organism>
<sequence length="56" mass="6578">MAAKGNREKIRLVSSAETGHFYTTTKNKRNMPEKMEIKKFDPVVRKHVIYKEAKIK</sequence>
<keyword id="KW-1185">Reference proteome</keyword>
<keyword id="KW-0687">Ribonucleoprotein</keyword>
<keyword id="KW-0689">Ribosomal protein</keyword>
<comment type="similarity">
    <text evidence="1">Belongs to the bacterial ribosomal protein bL33 family.</text>
</comment>
<feature type="chain" id="PRO_1000004135" description="Large ribosomal subunit protein bL33">
    <location>
        <begin position="1"/>
        <end position="56"/>
    </location>
</feature>
<accession>A3N3R0</accession>
<name>RL33_ACTP2</name>
<reference key="1">
    <citation type="journal article" date="2008" name="J. Bacteriol.">
        <title>The complete genome sequence of Actinobacillus pleuropneumoniae L20 (serotype 5b).</title>
        <authorList>
            <person name="Foote S.J."/>
            <person name="Bosse J.T."/>
            <person name="Bouevitch A.B."/>
            <person name="Langford P.R."/>
            <person name="Young N.M."/>
            <person name="Nash J.H.E."/>
        </authorList>
    </citation>
    <scope>NUCLEOTIDE SEQUENCE [LARGE SCALE GENOMIC DNA]</scope>
    <source>
        <strain>L20</strain>
    </source>
</reference>
<evidence type="ECO:0000255" key="1">
    <source>
        <dbReference type="HAMAP-Rule" id="MF_00294"/>
    </source>
</evidence>
<evidence type="ECO:0000305" key="2"/>
<protein>
    <recommendedName>
        <fullName evidence="1">Large ribosomal subunit protein bL33</fullName>
    </recommendedName>
    <alternativeName>
        <fullName evidence="2">50S ribosomal protein L33</fullName>
    </alternativeName>
</protein>
<proteinExistence type="inferred from homology"/>
<gene>
    <name evidence="1" type="primary">rpmG</name>
    <name type="ordered locus">APL_1972</name>
</gene>
<dbReference type="EMBL" id="CP000569">
    <property type="protein sequence ID" value="ABN75046.1"/>
    <property type="molecule type" value="Genomic_DNA"/>
</dbReference>
<dbReference type="RefSeq" id="WP_005599764.1">
    <property type="nucleotide sequence ID" value="NC_009053.1"/>
</dbReference>
<dbReference type="SMR" id="A3N3R0"/>
<dbReference type="STRING" id="416269.APL_1972"/>
<dbReference type="EnsemblBacteria" id="ABN75046">
    <property type="protein sequence ID" value="ABN75046"/>
    <property type="gene ID" value="APL_1972"/>
</dbReference>
<dbReference type="GeneID" id="48600273"/>
<dbReference type="KEGG" id="apl:APL_1972"/>
<dbReference type="eggNOG" id="COG0267">
    <property type="taxonomic scope" value="Bacteria"/>
</dbReference>
<dbReference type="HOGENOM" id="CLU_190949_1_1_6"/>
<dbReference type="Proteomes" id="UP000001432">
    <property type="component" value="Chromosome"/>
</dbReference>
<dbReference type="GO" id="GO:0022625">
    <property type="term" value="C:cytosolic large ribosomal subunit"/>
    <property type="evidence" value="ECO:0007669"/>
    <property type="project" value="TreeGrafter"/>
</dbReference>
<dbReference type="GO" id="GO:0003735">
    <property type="term" value="F:structural constituent of ribosome"/>
    <property type="evidence" value="ECO:0007669"/>
    <property type="project" value="InterPro"/>
</dbReference>
<dbReference type="GO" id="GO:0006412">
    <property type="term" value="P:translation"/>
    <property type="evidence" value="ECO:0007669"/>
    <property type="project" value="UniProtKB-UniRule"/>
</dbReference>
<dbReference type="FunFam" id="2.20.28.120:FF:000001">
    <property type="entry name" value="50S ribosomal protein L33"/>
    <property type="match status" value="1"/>
</dbReference>
<dbReference type="Gene3D" id="2.20.28.120">
    <property type="entry name" value="Ribosomal protein L33"/>
    <property type="match status" value="1"/>
</dbReference>
<dbReference type="HAMAP" id="MF_00294">
    <property type="entry name" value="Ribosomal_bL33"/>
    <property type="match status" value="1"/>
</dbReference>
<dbReference type="InterPro" id="IPR001705">
    <property type="entry name" value="Ribosomal_bL33"/>
</dbReference>
<dbReference type="InterPro" id="IPR018264">
    <property type="entry name" value="Ribosomal_bL33_CS"/>
</dbReference>
<dbReference type="InterPro" id="IPR038584">
    <property type="entry name" value="Ribosomal_bL33_sf"/>
</dbReference>
<dbReference type="InterPro" id="IPR011332">
    <property type="entry name" value="Ribosomal_zn-bd"/>
</dbReference>
<dbReference type="NCBIfam" id="NF001860">
    <property type="entry name" value="PRK00595.1"/>
    <property type="match status" value="1"/>
</dbReference>
<dbReference type="NCBIfam" id="TIGR01023">
    <property type="entry name" value="rpmG_bact"/>
    <property type="match status" value="1"/>
</dbReference>
<dbReference type="PANTHER" id="PTHR15238">
    <property type="entry name" value="54S RIBOSOMAL PROTEIN L39, MITOCHONDRIAL"/>
    <property type="match status" value="1"/>
</dbReference>
<dbReference type="PANTHER" id="PTHR15238:SF1">
    <property type="entry name" value="LARGE RIBOSOMAL SUBUNIT PROTEIN BL33M"/>
    <property type="match status" value="1"/>
</dbReference>
<dbReference type="Pfam" id="PF00471">
    <property type="entry name" value="Ribosomal_L33"/>
    <property type="match status" value="1"/>
</dbReference>
<dbReference type="SUPFAM" id="SSF57829">
    <property type="entry name" value="Zn-binding ribosomal proteins"/>
    <property type="match status" value="1"/>
</dbReference>
<dbReference type="PROSITE" id="PS00582">
    <property type="entry name" value="RIBOSOMAL_L33"/>
    <property type="match status" value="1"/>
</dbReference>